<feature type="chain" id="PRO_1000019237" description="Enolase">
    <location>
        <begin position="1"/>
        <end position="430"/>
    </location>
</feature>
<feature type="active site" description="Proton donor" evidence="1">
    <location>
        <position position="209"/>
    </location>
</feature>
<feature type="active site" description="Proton acceptor" evidence="1">
    <location>
        <position position="339"/>
    </location>
</feature>
<feature type="binding site" evidence="1">
    <location>
        <position position="167"/>
    </location>
    <ligand>
        <name>(2R)-2-phosphoglycerate</name>
        <dbReference type="ChEBI" id="CHEBI:58289"/>
    </ligand>
</feature>
<feature type="binding site" evidence="1">
    <location>
        <position position="246"/>
    </location>
    <ligand>
        <name>Mg(2+)</name>
        <dbReference type="ChEBI" id="CHEBI:18420"/>
    </ligand>
</feature>
<feature type="binding site" evidence="1">
    <location>
        <position position="287"/>
    </location>
    <ligand>
        <name>Mg(2+)</name>
        <dbReference type="ChEBI" id="CHEBI:18420"/>
    </ligand>
</feature>
<feature type="binding site" evidence="1">
    <location>
        <position position="314"/>
    </location>
    <ligand>
        <name>Mg(2+)</name>
        <dbReference type="ChEBI" id="CHEBI:18420"/>
    </ligand>
</feature>
<feature type="binding site" evidence="1">
    <location>
        <position position="339"/>
    </location>
    <ligand>
        <name>(2R)-2-phosphoglycerate</name>
        <dbReference type="ChEBI" id="CHEBI:58289"/>
    </ligand>
</feature>
<feature type="binding site" evidence="1">
    <location>
        <position position="368"/>
    </location>
    <ligand>
        <name>(2R)-2-phosphoglycerate</name>
        <dbReference type="ChEBI" id="CHEBI:58289"/>
    </ligand>
</feature>
<feature type="binding site" evidence="1">
    <location>
        <position position="369"/>
    </location>
    <ligand>
        <name>(2R)-2-phosphoglycerate</name>
        <dbReference type="ChEBI" id="CHEBI:58289"/>
    </ligand>
</feature>
<feature type="binding site" evidence="1">
    <location>
        <position position="390"/>
    </location>
    <ligand>
        <name>(2R)-2-phosphoglycerate</name>
        <dbReference type="ChEBI" id="CHEBI:58289"/>
    </ligand>
</feature>
<proteinExistence type="inferred from homology"/>
<reference key="1">
    <citation type="journal article" date="2007" name="PLoS Genet.">
        <title>Patterns and implications of gene gain and loss in the evolution of Prochlorococcus.</title>
        <authorList>
            <person name="Kettler G.C."/>
            <person name="Martiny A.C."/>
            <person name="Huang K."/>
            <person name="Zucker J."/>
            <person name="Coleman M.L."/>
            <person name="Rodrigue S."/>
            <person name="Chen F."/>
            <person name="Lapidus A."/>
            <person name="Ferriera S."/>
            <person name="Johnson J."/>
            <person name="Steglich C."/>
            <person name="Church G.M."/>
            <person name="Richardson P."/>
            <person name="Chisholm S.W."/>
        </authorList>
    </citation>
    <scope>NUCLEOTIDE SEQUENCE [LARGE SCALE GENOMIC DNA]</scope>
    <source>
        <strain>AS9601</strain>
    </source>
</reference>
<gene>
    <name evidence="1" type="primary">eno</name>
    <name type="ordered locus">A9601_02261</name>
</gene>
<name>ENO_PROMS</name>
<comment type="function">
    <text evidence="1">Catalyzes the reversible conversion of 2-phosphoglycerate (2-PG) into phosphoenolpyruvate (PEP). It is essential for the degradation of carbohydrates via glycolysis.</text>
</comment>
<comment type="catalytic activity">
    <reaction evidence="1">
        <text>(2R)-2-phosphoglycerate = phosphoenolpyruvate + H2O</text>
        <dbReference type="Rhea" id="RHEA:10164"/>
        <dbReference type="ChEBI" id="CHEBI:15377"/>
        <dbReference type="ChEBI" id="CHEBI:58289"/>
        <dbReference type="ChEBI" id="CHEBI:58702"/>
        <dbReference type="EC" id="4.2.1.11"/>
    </reaction>
</comment>
<comment type="cofactor">
    <cofactor evidence="1">
        <name>Mg(2+)</name>
        <dbReference type="ChEBI" id="CHEBI:18420"/>
    </cofactor>
    <text evidence="1">Binds a second Mg(2+) ion via substrate during catalysis.</text>
</comment>
<comment type="pathway">
    <text evidence="1">Carbohydrate degradation; glycolysis; pyruvate from D-glyceraldehyde 3-phosphate: step 4/5.</text>
</comment>
<comment type="subcellular location">
    <subcellularLocation>
        <location evidence="1">Cytoplasm</location>
    </subcellularLocation>
    <subcellularLocation>
        <location evidence="1">Secreted</location>
    </subcellularLocation>
    <subcellularLocation>
        <location evidence="1">Cell surface</location>
    </subcellularLocation>
    <text evidence="1">Fractions of enolase are present in both the cytoplasm and on the cell surface.</text>
</comment>
<comment type="similarity">
    <text evidence="1">Belongs to the enolase family.</text>
</comment>
<protein>
    <recommendedName>
        <fullName evidence="1">Enolase</fullName>
        <ecNumber evidence="1">4.2.1.11</ecNumber>
    </recommendedName>
    <alternativeName>
        <fullName evidence="1">2-phospho-D-glycerate hydro-lyase</fullName>
    </alternativeName>
    <alternativeName>
        <fullName evidence="1">2-phosphoglycerate dehydratase</fullName>
    </alternativeName>
</protein>
<evidence type="ECO:0000255" key="1">
    <source>
        <dbReference type="HAMAP-Rule" id="MF_00318"/>
    </source>
</evidence>
<keyword id="KW-0963">Cytoplasm</keyword>
<keyword id="KW-0324">Glycolysis</keyword>
<keyword id="KW-0456">Lyase</keyword>
<keyword id="KW-0460">Magnesium</keyword>
<keyword id="KW-0479">Metal-binding</keyword>
<keyword id="KW-0964">Secreted</keyword>
<sequence length="430" mass="46059">MKETIDFLIDTVEARQVLDSRGNPTVEAEVFLECGASGRAIVPSGASTGAHEAHELRDGGSKYMGKGVLNAVNKIHETISPALCGLSSLDQTAVDKLMIEIDGTPNKSNLGANSILAVSLATARASANALDIPLYRYLGDPLSNLLPVPLMNVINGGAHAPNSLDFQEFMLVPHGVNNFSESLRMGTEIFHSLKSLLDQKGLSTAVGDEGGFAPNLSSSVEAGDLLLEAIQKAGFKPGEQVSLALDAASTEFYRDGIYKYEGKSLNSSEMISYLSRLVSNYPIVSIEDGLAEDDWEGWSELNKELGNKVQLVGDDLFVTNTERLRKGIIEKSANSILIKVNQIGTLTETLEAIELAKMSGFTSVISHRSGETEDTTIADLSVATRSGQIKTGSLSRSERIAKYNRLLKIEEELGNQARFAGALGLGPKNI</sequence>
<dbReference type="EC" id="4.2.1.11" evidence="1"/>
<dbReference type="EMBL" id="CP000551">
    <property type="protein sequence ID" value="ABM69514.1"/>
    <property type="molecule type" value="Genomic_DNA"/>
</dbReference>
<dbReference type="RefSeq" id="WP_011817700.1">
    <property type="nucleotide sequence ID" value="NC_008816.1"/>
</dbReference>
<dbReference type="SMR" id="A2BP03"/>
<dbReference type="STRING" id="146891.A9601_02261"/>
<dbReference type="KEGG" id="pmb:A9601_02261"/>
<dbReference type="eggNOG" id="COG0148">
    <property type="taxonomic scope" value="Bacteria"/>
</dbReference>
<dbReference type="HOGENOM" id="CLU_031223_2_1_3"/>
<dbReference type="OrthoDB" id="9804716at2"/>
<dbReference type="UniPathway" id="UPA00109">
    <property type="reaction ID" value="UER00187"/>
</dbReference>
<dbReference type="Proteomes" id="UP000002590">
    <property type="component" value="Chromosome"/>
</dbReference>
<dbReference type="GO" id="GO:0009986">
    <property type="term" value="C:cell surface"/>
    <property type="evidence" value="ECO:0007669"/>
    <property type="project" value="UniProtKB-SubCell"/>
</dbReference>
<dbReference type="GO" id="GO:0005576">
    <property type="term" value="C:extracellular region"/>
    <property type="evidence" value="ECO:0007669"/>
    <property type="project" value="UniProtKB-SubCell"/>
</dbReference>
<dbReference type="GO" id="GO:0000015">
    <property type="term" value="C:phosphopyruvate hydratase complex"/>
    <property type="evidence" value="ECO:0007669"/>
    <property type="project" value="InterPro"/>
</dbReference>
<dbReference type="GO" id="GO:0000287">
    <property type="term" value="F:magnesium ion binding"/>
    <property type="evidence" value="ECO:0007669"/>
    <property type="project" value="UniProtKB-UniRule"/>
</dbReference>
<dbReference type="GO" id="GO:0004634">
    <property type="term" value="F:phosphopyruvate hydratase activity"/>
    <property type="evidence" value="ECO:0007669"/>
    <property type="project" value="UniProtKB-UniRule"/>
</dbReference>
<dbReference type="GO" id="GO:0006096">
    <property type="term" value="P:glycolytic process"/>
    <property type="evidence" value="ECO:0007669"/>
    <property type="project" value="UniProtKB-UniRule"/>
</dbReference>
<dbReference type="CDD" id="cd03313">
    <property type="entry name" value="enolase"/>
    <property type="match status" value="1"/>
</dbReference>
<dbReference type="FunFam" id="3.30.390.10:FF:000001">
    <property type="entry name" value="Enolase"/>
    <property type="match status" value="1"/>
</dbReference>
<dbReference type="Gene3D" id="3.20.20.120">
    <property type="entry name" value="Enolase-like C-terminal domain"/>
    <property type="match status" value="1"/>
</dbReference>
<dbReference type="Gene3D" id="3.30.390.10">
    <property type="entry name" value="Enolase-like, N-terminal domain"/>
    <property type="match status" value="1"/>
</dbReference>
<dbReference type="HAMAP" id="MF_00318">
    <property type="entry name" value="Enolase"/>
    <property type="match status" value="1"/>
</dbReference>
<dbReference type="InterPro" id="IPR000941">
    <property type="entry name" value="Enolase"/>
</dbReference>
<dbReference type="InterPro" id="IPR036849">
    <property type="entry name" value="Enolase-like_C_sf"/>
</dbReference>
<dbReference type="InterPro" id="IPR029017">
    <property type="entry name" value="Enolase-like_N"/>
</dbReference>
<dbReference type="InterPro" id="IPR020810">
    <property type="entry name" value="Enolase_C"/>
</dbReference>
<dbReference type="InterPro" id="IPR020809">
    <property type="entry name" value="Enolase_CS"/>
</dbReference>
<dbReference type="InterPro" id="IPR020811">
    <property type="entry name" value="Enolase_N"/>
</dbReference>
<dbReference type="NCBIfam" id="TIGR01060">
    <property type="entry name" value="eno"/>
    <property type="match status" value="1"/>
</dbReference>
<dbReference type="PANTHER" id="PTHR11902">
    <property type="entry name" value="ENOLASE"/>
    <property type="match status" value="1"/>
</dbReference>
<dbReference type="PANTHER" id="PTHR11902:SF1">
    <property type="entry name" value="ENOLASE"/>
    <property type="match status" value="1"/>
</dbReference>
<dbReference type="Pfam" id="PF00113">
    <property type="entry name" value="Enolase_C"/>
    <property type="match status" value="1"/>
</dbReference>
<dbReference type="Pfam" id="PF03952">
    <property type="entry name" value="Enolase_N"/>
    <property type="match status" value="1"/>
</dbReference>
<dbReference type="PIRSF" id="PIRSF001400">
    <property type="entry name" value="Enolase"/>
    <property type="match status" value="1"/>
</dbReference>
<dbReference type="PRINTS" id="PR00148">
    <property type="entry name" value="ENOLASE"/>
</dbReference>
<dbReference type="SFLD" id="SFLDF00002">
    <property type="entry name" value="enolase"/>
    <property type="match status" value="1"/>
</dbReference>
<dbReference type="SFLD" id="SFLDG00178">
    <property type="entry name" value="enolase"/>
    <property type="match status" value="1"/>
</dbReference>
<dbReference type="SMART" id="SM01192">
    <property type="entry name" value="Enolase_C"/>
    <property type="match status" value="1"/>
</dbReference>
<dbReference type="SMART" id="SM01193">
    <property type="entry name" value="Enolase_N"/>
    <property type="match status" value="1"/>
</dbReference>
<dbReference type="SUPFAM" id="SSF51604">
    <property type="entry name" value="Enolase C-terminal domain-like"/>
    <property type="match status" value="1"/>
</dbReference>
<dbReference type="SUPFAM" id="SSF54826">
    <property type="entry name" value="Enolase N-terminal domain-like"/>
    <property type="match status" value="1"/>
</dbReference>
<dbReference type="PROSITE" id="PS00164">
    <property type="entry name" value="ENOLASE"/>
    <property type="match status" value="1"/>
</dbReference>
<accession>A2BP03</accession>
<organism>
    <name type="scientific">Prochlorococcus marinus (strain AS9601)</name>
    <dbReference type="NCBI Taxonomy" id="146891"/>
    <lineage>
        <taxon>Bacteria</taxon>
        <taxon>Bacillati</taxon>
        <taxon>Cyanobacteriota</taxon>
        <taxon>Cyanophyceae</taxon>
        <taxon>Synechococcales</taxon>
        <taxon>Prochlorococcaceae</taxon>
        <taxon>Prochlorococcus</taxon>
    </lineage>
</organism>